<accession>Q7Q9C0</accession>
<accession>F5HLQ5</accession>
<dbReference type="EC" id="3.1.3.77" evidence="1"/>
<dbReference type="EMBL" id="AAAB01008904">
    <property type="protein sequence ID" value="EAA09634.5"/>
    <property type="status" value="ALT_SEQ"/>
    <property type="molecule type" value="Genomic_DNA"/>
</dbReference>
<dbReference type="EMBL" id="AAAB01008904">
    <property type="protein sequence ID" value="EGK97216.1"/>
    <property type="molecule type" value="Genomic_DNA"/>
</dbReference>
<dbReference type="RefSeq" id="XP_003436443.1">
    <property type="nucleotide sequence ID" value="XM_003436395.1"/>
</dbReference>
<dbReference type="RefSeq" id="XP_314226.5">
    <property type="nucleotide sequence ID" value="XM_314226.5"/>
</dbReference>
<dbReference type="SMR" id="Q7Q9C0"/>
<dbReference type="FunCoup" id="Q7Q9C0">
    <property type="interactions" value="2270"/>
</dbReference>
<dbReference type="STRING" id="7165.Q7Q9C0"/>
<dbReference type="PaxDb" id="7165-AGAP003331-PA"/>
<dbReference type="EnsemblMetazoa" id="AGAP003331-RB">
    <property type="protein sequence ID" value="AGAP003331-PB"/>
    <property type="gene ID" value="AGAP003331"/>
</dbReference>
<dbReference type="GeneID" id="1275006"/>
<dbReference type="KEGG" id="aga:1275006"/>
<dbReference type="CTD" id="40630"/>
<dbReference type="VEuPathDB" id="VectorBase:AGAMI1_009363"/>
<dbReference type="VEuPathDB" id="VectorBase:AGAP003331"/>
<dbReference type="eggNOG" id="KOG2630">
    <property type="taxonomic scope" value="Eukaryota"/>
</dbReference>
<dbReference type="HOGENOM" id="CLU_023273_0_0_1"/>
<dbReference type="InParanoid" id="Q7Q9C0"/>
<dbReference type="UniPathway" id="UPA00904">
    <property type="reaction ID" value="UER00876"/>
</dbReference>
<dbReference type="UniPathway" id="UPA00904">
    <property type="reaction ID" value="UER00877"/>
</dbReference>
<dbReference type="Proteomes" id="UP000007062">
    <property type="component" value="Chromosome 2R"/>
</dbReference>
<dbReference type="GO" id="GO:0005737">
    <property type="term" value="C:cytoplasm"/>
    <property type="evidence" value="ECO:0007669"/>
    <property type="project" value="UniProtKB-SubCell"/>
</dbReference>
<dbReference type="GO" id="GO:0005634">
    <property type="term" value="C:nucleus"/>
    <property type="evidence" value="ECO:0007669"/>
    <property type="project" value="UniProtKB-SubCell"/>
</dbReference>
<dbReference type="GO" id="GO:0043874">
    <property type="term" value="F:acireductone synthase activity"/>
    <property type="evidence" value="ECO:0000318"/>
    <property type="project" value="GO_Central"/>
</dbReference>
<dbReference type="GO" id="GO:0000287">
    <property type="term" value="F:magnesium ion binding"/>
    <property type="evidence" value="ECO:0007669"/>
    <property type="project" value="UniProtKB-UniRule"/>
</dbReference>
<dbReference type="GO" id="GO:0019509">
    <property type="term" value="P:L-methionine salvage from methylthioadenosine"/>
    <property type="evidence" value="ECO:0000318"/>
    <property type="project" value="GO_Central"/>
</dbReference>
<dbReference type="CDD" id="cd01629">
    <property type="entry name" value="HAD_EP"/>
    <property type="match status" value="1"/>
</dbReference>
<dbReference type="FunFam" id="1.10.720.60:FF:000004">
    <property type="entry name" value="Enolase-phosphatase E1"/>
    <property type="match status" value="1"/>
</dbReference>
<dbReference type="FunFam" id="3.40.50.1000:FF:000079">
    <property type="entry name" value="Enolase-phosphatase E1"/>
    <property type="match status" value="1"/>
</dbReference>
<dbReference type="Gene3D" id="1.10.720.60">
    <property type="match status" value="1"/>
</dbReference>
<dbReference type="Gene3D" id="3.40.50.1000">
    <property type="entry name" value="HAD superfamily/HAD-like"/>
    <property type="match status" value="1"/>
</dbReference>
<dbReference type="HAMAP" id="MF_01681">
    <property type="entry name" value="Salvage_MtnC"/>
    <property type="match status" value="1"/>
</dbReference>
<dbReference type="HAMAP" id="MF_03117">
    <property type="entry name" value="Salvage_MtnC_euk"/>
    <property type="match status" value="1"/>
</dbReference>
<dbReference type="InterPro" id="IPR023943">
    <property type="entry name" value="Enolase-ppase_E1"/>
</dbReference>
<dbReference type="InterPro" id="IPR027511">
    <property type="entry name" value="ENOPH1_eukaryotes"/>
</dbReference>
<dbReference type="InterPro" id="IPR036412">
    <property type="entry name" value="HAD-like_sf"/>
</dbReference>
<dbReference type="InterPro" id="IPR006439">
    <property type="entry name" value="HAD-SF_hydro_IA"/>
</dbReference>
<dbReference type="InterPro" id="IPR023214">
    <property type="entry name" value="HAD_sf"/>
</dbReference>
<dbReference type="NCBIfam" id="TIGR01691">
    <property type="entry name" value="enolase-ppase"/>
    <property type="match status" value="1"/>
</dbReference>
<dbReference type="NCBIfam" id="TIGR01549">
    <property type="entry name" value="HAD-SF-IA-v1"/>
    <property type="match status" value="1"/>
</dbReference>
<dbReference type="PANTHER" id="PTHR20371">
    <property type="entry name" value="ENOLASE-PHOSPHATASE E1"/>
    <property type="match status" value="1"/>
</dbReference>
<dbReference type="PANTHER" id="PTHR20371:SF1">
    <property type="entry name" value="ENOLASE-PHOSPHATASE E1"/>
    <property type="match status" value="1"/>
</dbReference>
<dbReference type="Pfam" id="PF00702">
    <property type="entry name" value="Hydrolase"/>
    <property type="match status" value="1"/>
</dbReference>
<dbReference type="SFLD" id="SFLDG01133">
    <property type="entry name" value="C1.5.4:_Enolase-phosphatase_Li"/>
    <property type="match status" value="1"/>
</dbReference>
<dbReference type="SFLD" id="SFLDF00044">
    <property type="entry name" value="enolase-phosphatase"/>
    <property type="match status" value="1"/>
</dbReference>
<dbReference type="SUPFAM" id="SSF56784">
    <property type="entry name" value="HAD-like"/>
    <property type="match status" value="1"/>
</dbReference>
<organism>
    <name type="scientific">Anopheles gambiae</name>
    <name type="common">African malaria mosquito</name>
    <dbReference type="NCBI Taxonomy" id="7165"/>
    <lineage>
        <taxon>Eukaryota</taxon>
        <taxon>Metazoa</taxon>
        <taxon>Ecdysozoa</taxon>
        <taxon>Arthropoda</taxon>
        <taxon>Hexapoda</taxon>
        <taxon>Insecta</taxon>
        <taxon>Pterygota</taxon>
        <taxon>Neoptera</taxon>
        <taxon>Endopterygota</taxon>
        <taxon>Diptera</taxon>
        <taxon>Nematocera</taxon>
        <taxon>Culicoidea</taxon>
        <taxon>Culicidae</taxon>
        <taxon>Anophelinae</taxon>
        <taxon>Anopheles</taxon>
    </lineage>
</organism>
<keyword id="KW-0028">Amino-acid biosynthesis</keyword>
<keyword id="KW-0963">Cytoplasm</keyword>
<keyword id="KW-0378">Hydrolase</keyword>
<keyword id="KW-0460">Magnesium</keyword>
<keyword id="KW-0479">Metal-binding</keyword>
<keyword id="KW-0486">Methionine biosynthesis</keyword>
<keyword id="KW-0539">Nucleus</keyword>
<keyword id="KW-1185">Reference proteome</keyword>
<name>ENOPH_ANOGA</name>
<evidence type="ECO:0000255" key="1">
    <source>
        <dbReference type="HAMAP-Rule" id="MF_03117"/>
    </source>
</evidence>
<evidence type="ECO:0000256" key="2">
    <source>
        <dbReference type="SAM" id="MobiDB-lite"/>
    </source>
</evidence>
<evidence type="ECO:0000305" key="3"/>
<sequence>MAAVVALGANVLSAKSIICDIEGTTTSISFVKDTLFPYALKHVEGYLKNNWNEEATKTVVTALREQAEEDKKAEVEGVVPIPTGDSEDIIPEIVKNVEWQMSLDRKTGSLKTLQGLVWAKGYKDGSIKGHVYDDVQKAFEQWTENGRKIYIYSSGSVDAQKLLFEHSEQGDLLKYLSGHYDTKIGAKREKESYTSILKNIESSPEEALFLTDVYAEAKAAKEAGLNVVLLDRPGNSELSEEERKDFPVIATFSDLSFAAETKEENGGATNGKRKIEETNDDVAEEDKAQVYPNKK</sequence>
<comment type="function">
    <text evidence="1">Bifunctional enzyme that catalyzes the enolization of 2,3-diketo-5-methylthiopentyl-1-phosphate (DK-MTP-1-P) into the intermediate 2-hydroxy-3-keto-5-methylthiopentenyl-1-phosphate (HK-MTPenyl-1-P), which is then dephosphorylated to form the acireductone 1,2-dihydroxy-3-keto-5-methylthiopentene (DHK-MTPene).</text>
</comment>
<comment type="catalytic activity">
    <reaction evidence="1">
        <text>5-methylsulfanyl-2,3-dioxopentyl phosphate + H2O = 1,2-dihydroxy-5-(methylsulfanyl)pent-1-en-3-one + phosphate</text>
        <dbReference type="Rhea" id="RHEA:21700"/>
        <dbReference type="ChEBI" id="CHEBI:15377"/>
        <dbReference type="ChEBI" id="CHEBI:43474"/>
        <dbReference type="ChEBI" id="CHEBI:49252"/>
        <dbReference type="ChEBI" id="CHEBI:58828"/>
        <dbReference type="EC" id="3.1.3.77"/>
    </reaction>
</comment>
<comment type="cofactor">
    <cofactor evidence="1">
        <name>Mg(2+)</name>
        <dbReference type="ChEBI" id="CHEBI:18420"/>
    </cofactor>
    <text evidence="1">Binds 1 Mg(2+) ion per subunit.</text>
</comment>
<comment type="pathway">
    <text evidence="1">Amino-acid biosynthesis; L-methionine biosynthesis via salvage pathway; L-methionine from S-methyl-5-thio-alpha-D-ribose 1-phosphate: step 3/6.</text>
</comment>
<comment type="pathway">
    <text evidence="1">Amino-acid biosynthesis; L-methionine biosynthesis via salvage pathway; L-methionine from S-methyl-5-thio-alpha-D-ribose 1-phosphate: step 4/6.</text>
</comment>
<comment type="subunit">
    <text evidence="1">Monomer.</text>
</comment>
<comment type="subcellular location">
    <subcellularLocation>
        <location evidence="1">Cytoplasm</location>
    </subcellularLocation>
    <subcellularLocation>
        <location evidence="1">Nucleus</location>
    </subcellularLocation>
</comment>
<comment type="similarity">
    <text evidence="1">Belongs to the HAD-like hydrolase superfamily. MasA/MtnC family.</text>
</comment>
<comment type="sequence caution" evidence="3">
    <conflict type="erroneous gene model prediction">
        <sequence resource="EMBL-CDS" id="EAA09634"/>
    </conflict>
</comment>
<feature type="chain" id="PRO_0000393974" description="Enolase-phosphatase E1">
    <location>
        <begin position="1"/>
        <end position="295"/>
    </location>
</feature>
<feature type="region of interest" description="Disordered" evidence="2">
    <location>
        <begin position="260"/>
        <end position="295"/>
    </location>
</feature>
<feature type="binding site" evidence="1">
    <location>
        <position position="20"/>
    </location>
    <ligand>
        <name>Mg(2+)</name>
        <dbReference type="ChEBI" id="CHEBI:18420"/>
    </ligand>
</feature>
<feature type="binding site" evidence="1">
    <location>
        <position position="22"/>
    </location>
    <ligand>
        <name>Mg(2+)</name>
        <dbReference type="ChEBI" id="CHEBI:18420"/>
    </ligand>
</feature>
<feature type="binding site" evidence="1">
    <location>
        <begin position="153"/>
        <end position="154"/>
    </location>
    <ligand>
        <name>substrate</name>
    </ligand>
</feature>
<feature type="binding site" evidence="1">
    <location>
        <position position="187"/>
    </location>
    <ligand>
        <name>substrate</name>
    </ligand>
</feature>
<feature type="binding site" evidence="1">
    <location>
        <position position="212"/>
    </location>
    <ligand>
        <name>Mg(2+)</name>
        <dbReference type="ChEBI" id="CHEBI:18420"/>
    </ligand>
</feature>
<reference key="1">
    <citation type="journal article" date="2002" name="Science">
        <title>The genome sequence of the malaria mosquito Anopheles gambiae.</title>
        <authorList>
            <person name="Holt R.A."/>
            <person name="Subramanian G.M."/>
            <person name="Halpern A."/>
            <person name="Sutton G.G."/>
            <person name="Charlab R."/>
            <person name="Nusskern D.R."/>
            <person name="Wincker P."/>
            <person name="Clark A.G."/>
            <person name="Ribeiro J.M.C."/>
            <person name="Wides R."/>
            <person name="Salzberg S.L."/>
            <person name="Loftus B.J."/>
            <person name="Yandell M.D."/>
            <person name="Majoros W.H."/>
            <person name="Rusch D.B."/>
            <person name="Lai Z."/>
            <person name="Kraft C.L."/>
            <person name="Abril J.F."/>
            <person name="Anthouard V."/>
            <person name="Arensburger P."/>
            <person name="Atkinson P.W."/>
            <person name="Baden H."/>
            <person name="de Berardinis V."/>
            <person name="Baldwin D."/>
            <person name="Benes V."/>
            <person name="Biedler J."/>
            <person name="Blass C."/>
            <person name="Bolanos R."/>
            <person name="Boscus D."/>
            <person name="Barnstead M."/>
            <person name="Cai S."/>
            <person name="Center A."/>
            <person name="Chaturverdi K."/>
            <person name="Christophides G.K."/>
            <person name="Chrystal M.A.M."/>
            <person name="Clamp M."/>
            <person name="Cravchik A."/>
            <person name="Curwen V."/>
            <person name="Dana A."/>
            <person name="Delcher A."/>
            <person name="Dew I."/>
            <person name="Evans C.A."/>
            <person name="Flanigan M."/>
            <person name="Grundschober-Freimoser A."/>
            <person name="Friedli L."/>
            <person name="Gu Z."/>
            <person name="Guan P."/>
            <person name="Guigo R."/>
            <person name="Hillenmeyer M.E."/>
            <person name="Hladun S.L."/>
            <person name="Hogan J.R."/>
            <person name="Hong Y.S."/>
            <person name="Hoover J."/>
            <person name="Jaillon O."/>
            <person name="Ke Z."/>
            <person name="Kodira C.D."/>
            <person name="Kokoza E."/>
            <person name="Koutsos A."/>
            <person name="Letunic I."/>
            <person name="Levitsky A.A."/>
            <person name="Liang Y."/>
            <person name="Lin J.-J."/>
            <person name="Lobo N.F."/>
            <person name="Lopez J.R."/>
            <person name="Malek J.A."/>
            <person name="McIntosh T.C."/>
            <person name="Meister S."/>
            <person name="Miller J.R."/>
            <person name="Mobarry C."/>
            <person name="Mongin E."/>
            <person name="Murphy S.D."/>
            <person name="O'Brochta D.A."/>
            <person name="Pfannkoch C."/>
            <person name="Qi R."/>
            <person name="Regier M.A."/>
            <person name="Remington K."/>
            <person name="Shao H."/>
            <person name="Sharakhova M.V."/>
            <person name="Sitter C.D."/>
            <person name="Shetty J."/>
            <person name="Smith T.J."/>
            <person name="Strong R."/>
            <person name="Sun J."/>
            <person name="Thomasova D."/>
            <person name="Ton L.Q."/>
            <person name="Topalis P."/>
            <person name="Tu Z.J."/>
            <person name="Unger M.F."/>
            <person name="Walenz B."/>
            <person name="Wang A.H."/>
            <person name="Wang J."/>
            <person name="Wang M."/>
            <person name="Wang X."/>
            <person name="Woodford K.J."/>
            <person name="Wortman J.R."/>
            <person name="Wu M."/>
            <person name="Yao A."/>
            <person name="Zdobnov E.M."/>
            <person name="Zhang H."/>
            <person name="Zhao Q."/>
            <person name="Zhao S."/>
            <person name="Zhu S.C."/>
            <person name="Zhimulev I."/>
            <person name="Coluzzi M."/>
            <person name="della Torre A."/>
            <person name="Roth C.W."/>
            <person name="Louis C."/>
            <person name="Kalush F."/>
            <person name="Mural R.J."/>
            <person name="Myers E.W."/>
            <person name="Adams M.D."/>
            <person name="Smith H.O."/>
            <person name="Broder S."/>
            <person name="Gardner M.J."/>
            <person name="Fraser C.M."/>
            <person name="Birney E."/>
            <person name="Bork P."/>
            <person name="Brey P.T."/>
            <person name="Venter J.C."/>
            <person name="Weissenbach J."/>
            <person name="Kafatos F.C."/>
            <person name="Collins F.H."/>
            <person name="Hoffman S.L."/>
        </authorList>
    </citation>
    <scope>NUCLEOTIDE SEQUENCE [LARGE SCALE GENOMIC DNA]</scope>
    <source>
        <strain>PEST</strain>
    </source>
</reference>
<proteinExistence type="inferred from homology"/>
<protein>
    <recommendedName>
        <fullName evidence="1">Enolase-phosphatase E1</fullName>
        <ecNumber evidence="1">3.1.3.77</ecNumber>
    </recommendedName>
    <alternativeName>
        <fullName evidence="1">2,3-diketo-5-methylthio-1-phosphopentane phosphatase</fullName>
    </alternativeName>
</protein>
<gene>
    <name type="ORF">AGAP003331</name>
</gene>